<organism>
    <name type="scientific">Arabidopsis thaliana</name>
    <name type="common">Mouse-ear cress</name>
    <dbReference type="NCBI Taxonomy" id="3702"/>
    <lineage>
        <taxon>Eukaryota</taxon>
        <taxon>Viridiplantae</taxon>
        <taxon>Streptophyta</taxon>
        <taxon>Embryophyta</taxon>
        <taxon>Tracheophyta</taxon>
        <taxon>Spermatophyta</taxon>
        <taxon>Magnoliopsida</taxon>
        <taxon>eudicotyledons</taxon>
        <taxon>Gunneridae</taxon>
        <taxon>Pentapetalae</taxon>
        <taxon>rosids</taxon>
        <taxon>malvids</taxon>
        <taxon>Brassicales</taxon>
        <taxon>Brassicaceae</taxon>
        <taxon>Camelineae</taxon>
        <taxon>Arabidopsis</taxon>
    </lineage>
</organism>
<proteinExistence type="evidence at protein level"/>
<keyword id="KW-0067">ATP-binding</keyword>
<keyword id="KW-1003">Cell membrane</keyword>
<keyword id="KW-0381">Hypersensitive response</keyword>
<keyword id="KW-0433">Leucine-rich repeat</keyword>
<keyword id="KW-0472">Membrane</keyword>
<keyword id="KW-0547">Nucleotide-binding</keyword>
<keyword id="KW-0611">Plant defense</keyword>
<keyword id="KW-1185">Reference proteome</keyword>
<keyword id="KW-0677">Repeat</keyword>
<evidence type="ECO:0000255" key="1"/>
<evidence type="ECO:0000255" key="2">
    <source>
        <dbReference type="PROSITE-ProRule" id="PRU00499"/>
    </source>
</evidence>
<evidence type="ECO:0000269" key="3">
    <source>
    </source>
</evidence>
<evidence type="ECO:0000269" key="4">
    <source>
    </source>
</evidence>
<evidence type="ECO:0000269" key="5">
    <source>
    </source>
</evidence>
<evidence type="ECO:0000269" key="6">
    <source>
    </source>
</evidence>
<evidence type="ECO:0000269" key="7">
    <source>
    </source>
</evidence>
<evidence type="ECO:0000269" key="8">
    <source>
    </source>
</evidence>
<evidence type="ECO:0000269" key="9">
    <source>
    </source>
</evidence>
<evidence type="ECO:0000303" key="10">
    <source>
    </source>
</evidence>
<evidence type="ECO:0000303" key="11">
    <source>
    </source>
</evidence>
<evidence type="ECO:0000305" key="12"/>
<evidence type="ECO:0000312" key="13">
    <source>
        <dbReference type="Araport" id="AT3G07040"/>
    </source>
</evidence>
<evidence type="ECO:0000312" key="14">
    <source>
        <dbReference type="EMBL" id="AAF27008.1"/>
    </source>
</evidence>
<dbReference type="EMBL" id="X87851">
    <property type="protein sequence ID" value="CAA61131.1"/>
    <property type="molecule type" value="Genomic_DNA"/>
</dbReference>
<dbReference type="EMBL" id="AC016827">
    <property type="protein sequence ID" value="AAF27008.1"/>
    <property type="molecule type" value="Genomic_DNA"/>
</dbReference>
<dbReference type="EMBL" id="CP002686">
    <property type="protein sequence ID" value="AEE74492.1"/>
    <property type="molecule type" value="Genomic_DNA"/>
</dbReference>
<dbReference type="PIR" id="A57072">
    <property type="entry name" value="A57072"/>
</dbReference>
<dbReference type="RefSeq" id="NP_187360.1">
    <property type="nucleotide sequence ID" value="NM_111584.3"/>
</dbReference>
<dbReference type="SMR" id="Q39214"/>
<dbReference type="BioGRID" id="5224">
    <property type="interactions" value="7"/>
</dbReference>
<dbReference type="FunCoup" id="Q39214">
    <property type="interactions" value="344"/>
</dbReference>
<dbReference type="STRING" id="3702.Q39214"/>
<dbReference type="iPTMnet" id="Q39214"/>
<dbReference type="PaxDb" id="3702-AT3G07040.1"/>
<dbReference type="ProteomicsDB" id="228192"/>
<dbReference type="EnsemblPlants" id="AT3G07040.1">
    <property type="protein sequence ID" value="AT3G07040.1"/>
    <property type="gene ID" value="AT3G07040"/>
</dbReference>
<dbReference type="GeneID" id="819889"/>
<dbReference type="Gramene" id="AT3G07040.1">
    <property type="protein sequence ID" value="AT3G07040.1"/>
    <property type="gene ID" value="AT3G07040"/>
</dbReference>
<dbReference type="KEGG" id="ath:AT3G07040"/>
<dbReference type="Araport" id="AT3G07040"/>
<dbReference type="TAIR" id="AT3G07040">
    <property type="gene designation" value="RPM1"/>
</dbReference>
<dbReference type="eggNOG" id="KOG4658">
    <property type="taxonomic scope" value="Eukaryota"/>
</dbReference>
<dbReference type="HOGENOM" id="CLU_000837_25_4_1"/>
<dbReference type="InParanoid" id="Q39214"/>
<dbReference type="OMA" id="ANQECAY"/>
<dbReference type="PhylomeDB" id="Q39214"/>
<dbReference type="PRO" id="PR:Q39214"/>
<dbReference type="Proteomes" id="UP000006548">
    <property type="component" value="Chromosome 3"/>
</dbReference>
<dbReference type="ExpressionAtlas" id="Q39214">
    <property type="expression patterns" value="baseline and differential"/>
</dbReference>
<dbReference type="GO" id="GO:0012505">
    <property type="term" value="C:endomembrane system"/>
    <property type="evidence" value="ECO:0007669"/>
    <property type="project" value="UniProtKB-SubCell"/>
</dbReference>
<dbReference type="GO" id="GO:0031234">
    <property type="term" value="C:extrinsic component of cytoplasmic side of plasma membrane"/>
    <property type="evidence" value="ECO:0000314"/>
    <property type="project" value="CACAO"/>
</dbReference>
<dbReference type="GO" id="GO:0005886">
    <property type="term" value="C:plasma membrane"/>
    <property type="evidence" value="ECO:0000314"/>
    <property type="project" value="TAIR"/>
</dbReference>
<dbReference type="GO" id="GO:0043531">
    <property type="term" value="F:ADP binding"/>
    <property type="evidence" value="ECO:0007669"/>
    <property type="project" value="InterPro"/>
</dbReference>
<dbReference type="GO" id="GO:0005524">
    <property type="term" value="F:ATP binding"/>
    <property type="evidence" value="ECO:0007669"/>
    <property type="project" value="UniProtKB-KW"/>
</dbReference>
<dbReference type="GO" id="GO:0000166">
    <property type="term" value="F:nucleotide binding"/>
    <property type="evidence" value="ECO:0000250"/>
    <property type="project" value="TAIR"/>
</dbReference>
<dbReference type="GO" id="GO:0009626">
    <property type="term" value="P:plant-type hypersensitive response"/>
    <property type="evidence" value="ECO:0000314"/>
    <property type="project" value="TAIR"/>
</dbReference>
<dbReference type="CDD" id="cd14798">
    <property type="entry name" value="RX-CC_like"/>
    <property type="match status" value="1"/>
</dbReference>
<dbReference type="FunFam" id="3.80.10.10:FF:000940">
    <property type="entry name" value="Disease resistance RPP8-like protein 3"/>
    <property type="match status" value="1"/>
</dbReference>
<dbReference type="FunFam" id="3.40.50.300:FF:001091">
    <property type="entry name" value="Probable disease resistance protein At1g61300"/>
    <property type="match status" value="1"/>
</dbReference>
<dbReference type="FunFam" id="1.10.10.10:FF:000322">
    <property type="entry name" value="Probable disease resistance protein At1g63360"/>
    <property type="match status" value="1"/>
</dbReference>
<dbReference type="FunFam" id="1.10.8.430:FF:000003">
    <property type="entry name" value="Probable disease resistance protein At5g66910"/>
    <property type="match status" value="1"/>
</dbReference>
<dbReference type="Gene3D" id="1.20.5.4130">
    <property type="match status" value="1"/>
</dbReference>
<dbReference type="Gene3D" id="1.10.8.430">
    <property type="entry name" value="Helical domain of apoptotic protease-activating factors"/>
    <property type="match status" value="1"/>
</dbReference>
<dbReference type="Gene3D" id="3.40.50.300">
    <property type="entry name" value="P-loop containing nucleotide triphosphate hydrolases"/>
    <property type="match status" value="1"/>
</dbReference>
<dbReference type="Gene3D" id="3.80.10.10">
    <property type="entry name" value="Ribonuclease Inhibitor"/>
    <property type="match status" value="1"/>
</dbReference>
<dbReference type="Gene3D" id="1.10.10.10">
    <property type="entry name" value="Winged helix-like DNA-binding domain superfamily/Winged helix DNA-binding domain"/>
    <property type="match status" value="1"/>
</dbReference>
<dbReference type="InterPro" id="IPR042197">
    <property type="entry name" value="Apaf_helical"/>
</dbReference>
<dbReference type="InterPro" id="IPR044974">
    <property type="entry name" value="Disease_R_plants"/>
</dbReference>
<dbReference type="InterPro" id="IPR032675">
    <property type="entry name" value="LRR_dom_sf"/>
</dbReference>
<dbReference type="InterPro" id="IPR055414">
    <property type="entry name" value="LRR_R13L4/SHOC2-like"/>
</dbReference>
<dbReference type="InterPro" id="IPR002182">
    <property type="entry name" value="NB-ARC"/>
</dbReference>
<dbReference type="InterPro" id="IPR027417">
    <property type="entry name" value="P-loop_NTPase"/>
</dbReference>
<dbReference type="InterPro" id="IPR038005">
    <property type="entry name" value="RX-like_CC"/>
</dbReference>
<dbReference type="InterPro" id="IPR041118">
    <property type="entry name" value="Rx_N"/>
</dbReference>
<dbReference type="InterPro" id="IPR036388">
    <property type="entry name" value="WH-like_DNA-bd_sf"/>
</dbReference>
<dbReference type="PANTHER" id="PTHR23155">
    <property type="entry name" value="DISEASE RESISTANCE PROTEIN RP"/>
    <property type="match status" value="1"/>
</dbReference>
<dbReference type="PANTHER" id="PTHR23155:SF1205">
    <property type="entry name" value="DISEASE RESISTANCE PROTEIN RPM1"/>
    <property type="match status" value="1"/>
</dbReference>
<dbReference type="Pfam" id="PF23598">
    <property type="entry name" value="LRR_14"/>
    <property type="match status" value="1"/>
</dbReference>
<dbReference type="Pfam" id="PF00931">
    <property type="entry name" value="NB-ARC"/>
    <property type="match status" value="1"/>
</dbReference>
<dbReference type="Pfam" id="PF18052">
    <property type="entry name" value="Rx_N"/>
    <property type="match status" value="1"/>
</dbReference>
<dbReference type="Pfam" id="PF23559">
    <property type="entry name" value="WH_DRP"/>
    <property type="match status" value="1"/>
</dbReference>
<dbReference type="PRINTS" id="PR00364">
    <property type="entry name" value="DISEASERSIST"/>
</dbReference>
<dbReference type="SUPFAM" id="SSF52058">
    <property type="entry name" value="L domain-like"/>
    <property type="match status" value="1"/>
</dbReference>
<dbReference type="SUPFAM" id="SSF52540">
    <property type="entry name" value="P-loop containing nucleoside triphosphate hydrolases"/>
    <property type="match status" value="1"/>
</dbReference>
<feature type="chain" id="PRO_0000212717" description="Disease resistance protein RPM1">
    <location>
        <begin position="1"/>
        <end position="926"/>
    </location>
</feature>
<feature type="domain" description="NB-ARC" evidence="1">
    <location>
        <begin position="153"/>
        <end position="467"/>
    </location>
</feature>
<feature type="repeat" description="LRR 1" evidence="1">
    <location>
        <begin position="561"/>
        <end position="580"/>
    </location>
</feature>
<feature type="repeat" description="LRR 2" evidence="1">
    <location>
        <begin position="581"/>
        <end position="603"/>
    </location>
</feature>
<feature type="repeat" description="LRR 3" evidence="1">
    <location>
        <begin position="605"/>
        <end position="625"/>
    </location>
</feature>
<feature type="repeat" description="LRR 4" evidence="1">
    <location>
        <begin position="626"/>
        <end position="649"/>
    </location>
</feature>
<feature type="repeat" description="LRR 5" evidence="1">
    <location>
        <begin position="686"/>
        <end position="707"/>
    </location>
</feature>
<feature type="repeat" description="LRR 6" evidence="1">
    <location>
        <begin position="708"/>
        <end position="731"/>
    </location>
</feature>
<feature type="repeat" description="LRR 7" evidence="1">
    <location>
        <begin position="756"/>
        <end position="777"/>
    </location>
</feature>
<feature type="repeat" description="LRR 8" evidence="1">
    <location>
        <begin position="778"/>
        <end position="804"/>
    </location>
</feature>
<feature type="repeat" description="LRR 9" evidence="1">
    <location>
        <begin position="825"/>
        <end position="836"/>
    </location>
</feature>
<feature type="repeat" description="LRR 10" evidence="1">
    <location>
        <begin position="837"/>
        <end position="859"/>
    </location>
</feature>
<feature type="repeat" description="LRR 11" evidence="1">
    <location>
        <begin position="876"/>
        <end position="900"/>
    </location>
</feature>
<feature type="region of interest" description="Leucine-zipper" evidence="1">
    <location>
        <begin position="10"/>
        <end position="45"/>
    </location>
</feature>
<feature type="binding site" evidence="2">
    <location>
        <begin position="200"/>
        <end position="207"/>
    </location>
    <ligand>
        <name>ATP</name>
        <dbReference type="ChEBI" id="CHEBI:30616"/>
    </ligand>
</feature>
<feature type="mutagenesis site" description="Loss of function." evidence="3">
    <original>S</original>
    <variation>F</variation>
    <location>
        <position position="43"/>
    </location>
</feature>
<feature type="mutagenesis site" description="Loss of function." evidence="3">
    <original>P</original>
    <variation>S</variation>
    <location>
        <position position="105"/>
    </location>
</feature>
<feature type="mutagenesis site" description="Loss of function." evidence="3">
    <original>G</original>
    <variation>R</variation>
    <location>
        <position position="174"/>
    </location>
</feature>
<feature type="mutagenesis site" description="Loss of function." evidence="3">
    <original>L</original>
    <variation>F</variation>
    <location>
        <position position="186"/>
    </location>
</feature>
<feature type="mutagenesis site" description="Loss of function." evidence="3">
    <original>G</original>
    <variation>D</variation>
    <variation>S</variation>
    <location>
        <position position="203"/>
    </location>
</feature>
<feature type="mutagenesis site" description="Loss of function." evidence="3">
    <original>G</original>
    <variation>R</variation>
    <variation>E</variation>
    <location>
        <position position="205"/>
    </location>
</feature>
<feature type="mutagenesis site" description="Loss of function." evidence="3">
    <original>A</original>
    <variation>V</variation>
    <location>
        <position position="211"/>
    </location>
</feature>
<feature type="mutagenesis site" description="Loss of function." evidence="3">
    <original>V</original>
    <variation>M</variation>
    <location>
        <position position="219"/>
    </location>
</feature>
<feature type="mutagenesis site" description="Loss of function." evidence="3">
    <original>E</original>
    <variation>K</variation>
    <location>
        <position position="247"/>
    </location>
</feature>
<feature type="mutagenesis site" description="Loss of function." evidence="3">
    <original>V</original>
    <variation>M</variation>
    <location>
        <position position="269"/>
    </location>
</feature>
<feature type="mutagenesis site" description="Loss of function." evidence="3">
    <original>L</original>
    <variation>F</variation>
    <location>
        <position position="272"/>
    </location>
</feature>
<feature type="mutagenesis site" description="Loss of function." evidence="3">
    <original>T</original>
    <variation>I</variation>
    <location>
        <position position="290"/>
    </location>
</feature>
<feature type="mutagenesis site" description="In rps3-2; loss of function." evidence="3">
    <original>L</original>
    <variation>F</variation>
    <location>
        <position position="301"/>
    </location>
</feature>
<feature type="mutagenesis site" description="Loss of function." evidence="3">
    <original>G</original>
    <variation>E</variation>
    <location>
        <position position="307"/>
    </location>
</feature>
<feature type="mutagenesis site" description="Loss of function." evidence="3">
    <original>T</original>
    <variation>I</variation>
    <location>
        <position position="313"/>
    </location>
</feature>
<feature type="mutagenesis site" description="Loss of function." evidence="3">
    <original>G</original>
    <variation>E</variation>
    <location>
        <position position="325"/>
    </location>
</feature>
<feature type="mutagenesis site" description="Loss of function." evidence="3">
    <original>E</original>
    <variation>K</variation>
    <location>
        <position position="340"/>
    </location>
</feature>
<feature type="mutagenesis site" description="Loss of function.">
    <original>A</original>
    <variation>V</variation>
    <location>
        <position position="341"/>
    </location>
</feature>
<feature type="mutagenesis site" description="Loss of function." evidence="3">
    <original>L</original>
    <variation>F</variation>
    <location>
        <position position="344"/>
    </location>
</feature>
<feature type="mutagenesis site" description="Loss of function." evidence="3">
    <original>A</original>
    <variation>V</variation>
    <location>
        <position position="379"/>
    </location>
</feature>
<feature type="mutagenesis site" description="Loss of function." evidence="3">
    <original>G</original>
    <variation>R</variation>
    <location>
        <position position="384"/>
    </location>
</feature>
<feature type="mutagenesis site" description="Loss of function." evidence="3">
    <original>E</original>
    <variation>K</variation>
    <location>
        <position position="395"/>
    </location>
</feature>
<feature type="mutagenesis site" description="Loss of function." evidence="3">
    <original>S</original>
    <variation>F</variation>
    <location>
        <position position="439"/>
    </location>
</feature>
<feature type="mutagenesis site" description="Loss of function." evidence="3">
    <original>P</original>
    <variation>L</variation>
    <location>
        <position position="442"/>
    </location>
</feature>
<feature type="mutagenesis site" description="Loss of function." evidence="3">
    <original>P</original>
    <variation>L</variation>
    <location>
        <position position="464"/>
    </location>
</feature>
<feature type="mutagenesis site" description="Loss of function." evidence="3">
    <original>G</original>
    <variation>R</variation>
    <location>
        <position position="467"/>
    </location>
</feature>
<feature type="mutagenesis site" description="Loss of function." evidence="3">
    <original>E</original>
    <variation>K</variation>
    <location>
        <position position="471"/>
    </location>
</feature>
<feature type="mutagenesis site" description="Loss of function." evidence="3">
    <original>A</original>
    <variation>T</variation>
    <location>
        <position position="474"/>
    </location>
</feature>
<feature type="mutagenesis site" description="Loss of function." evidence="3">
    <original>P</original>
    <variation>L</variation>
    <location>
        <position position="494"/>
    </location>
</feature>
<feature type="mutagenesis site" description="Loss of function." evidence="3">
    <original>R</original>
    <variation>Q</variation>
    <location>
        <position position="497"/>
    </location>
</feature>
<feature type="mutagenesis site" description="Loss of function." evidence="3">
    <original>P</original>
    <variation>L</variation>
    <variation>S</variation>
    <location>
        <position position="498"/>
    </location>
</feature>
<feature type="mutagenesis site" description="Loss of function." evidence="3">
    <original>S</original>
    <variation>F</variation>
    <location>
        <position position="515"/>
    </location>
</feature>
<feature type="mutagenesis site" description="Loss of function." evidence="3">
    <original>P</original>
    <variation>S</variation>
    <variation>L</variation>
    <location>
        <position position="620"/>
    </location>
</feature>
<feature type="mutagenesis site" description="Loss of function." evidence="3">
    <original>S</original>
    <variation>F</variation>
    <location>
        <position position="738"/>
    </location>
</feature>
<feature type="mutagenesis site" description="In rps3-4; loss of function." evidence="3">
    <original>G</original>
    <variation>E</variation>
    <location>
        <position position="766"/>
    </location>
</feature>
<feature type="mutagenesis site" description="Loss of function." evidence="3">
    <original>L</original>
    <variation>F</variation>
    <location>
        <position position="778"/>
    </location>
</feature>
<feature type="mutagenesis site" description="Loss of function." evidence="3">
    <original>L</original>
    <variation>F</variation>
    <location>
        <position position="781"/>
    </location>
</feature>
<feature type="mutagenesis site" description="Loss of function." evidence="3">
    <original>R</original>
    <variation>H</variation>
    <location>
        <position position="787"/>
    </location>
</feature>
<feature type="mutagenesis site" description="Loss of function." evidence="3">
    <original>N</original>
    <variation>I</variation>
    <location>
        <position position="812"/>
    </location>
</feature>
<feature type="mutagenesis site" description="Loss of function." evidence="3">
    <original>L</original>
    <variation>F</variation>
    <location>
        <position position="852"/>
    </location>
</feature>
<feature type="mutagenesis site" description="Loss of function." evidence="3">
    <original>L</original>
    <variation>F</variation>
    <location>
        <position position="924"/>
    </location>
</feature>
<accession>Q39214</accession>
<protein>
    <recommendedName>
        <fullName evidence="10">Disease resistance protein RPM1</fullName>
    </recommendedName>
    <alternativeName>
        <fullName evidence="11">Resistance to Pseudomonas syringae protein 3</fullName>
    </alternativeName>
    <alternativeName>
        <fullName evidence="10">Resistance to Pseudomonas syringae pv. Maculicola protein 1</fullName>
    </alternativeName>
</protein>
<sequence length="926" mass="106883">MASATVDFGIGRILSVLENETLLLSGVHGEIDKMKKELLIMKSFLEDTHKHGGNGSTTTTTQLFQTFVANTRDLAYQIEDILDEFGYHIHGYRSCAKIWRAFHFPRYMWARHSIAQKLGMVNVMIQSISDSMKRYYHSENYQAALLPPIDDGDAKWVNNISESSLFFSENSLVGIDAPKGKLIGRLLSPEPQRIVVAVVGMGGSGKTTLSANIFKSQSVRRHFESYAWVTISKSYVIEDVFRTMIKEFYKEADTQIPAELYSLGYRELVEKLVEYLQSKRYIVVLDDVWTTGLWREISIALPDGIYGSRVMMTTRDMNVASFPYGIGSTKHEIELLKEDEAWVLFSNKAFPASLEQCRTQNLEPIARKLVERCQGLPLAIASLGSMMSTKKFESEWKKVYSTLNWELNNNHELKIVRSIMFLSFNDLPYPLKRCFLYCSLFPVNYRMKRKRLIRMWMAQRFVEPIRGVKAEEVADSYLNELVYRNMLQVILWNPFGRPKAFKMHDVIWEIALSVSKLERFCDVYNDDSDGDDAAETMENYGSRHLCIQKEMTPDSIRATNLHSLLVCSSAKHKMELLPSLNLLRALDLEDSSISKLPDCLVTMFNLKYLNLSKTQVKELPKNFHKLVNLETLNTKHSKIEELPLGMWKLKKLRYLITFRRNEGHDSNWNYVLGTRVVPKIWQLKDLQVMDCFNAEDELIKNLGCMTQLTRISLVMVRREHGRDLCDSLNKIKRIRFLSLTSIDEEEPLEIDDLIATASIEKLFLAGKLERVPSWFNTLQNLTYLGLRGSQLQENAILSIQTLPRLVWLSFYNAYMGPRLRFAQGFQNLKILEIVQMKHLTEVVIEDGAMFELQKLYVRACRGLEYVPRGIENLINLQELHLIHVSNQLVERIRGEGSVDRSRVKHIPAIKHYFRTDNGSFYVSLSS</sequence>
<reference key="1">
    <citation type="journal article" date="1995" name="Science">
        <title>Structure of the Arabidopsis RPM1 gene enabling dual specificity disease resistance.</title>
        <authorList>
            <person name="Grant M.R."/>
            <person name="Godiard L."/>
            <person name="Straube E."/>
            <person name="Ashfield T."/>
            <person name="Lewald J."/>
            <person name="Stattler A."/>
            <person name="Innes R.W."/>
            <person name="Dangl J.L."/>
        </authorList>
    </citation>
    <scope>NUCLEOTIDE SEQUENCE [GENOMIC DNA]</scope>
    <scope>MUTANTS RPS3-2 AND RPS3-4</scope>
    <source>
        <strain>cv. Columbia</strain>
    </source>
</reference>
<reference key="2">
    <citation type="journal article" date="2000" name="Nature">
        <title>Sequence and analysis of chromosome 3 of the plant Arabidopsis thaliana.</title>
        <authorList>
            <person name="Salanoubat M."/>
            <person name="Lemcke K."/>
            <person name="Rieger M."/>
            <person name="Ansorge W."/>
            <person name="Unseld M."/>
            <person name="Fartmann B."/>
            <person name="Valle G."/>
            <person name="Bloecker H."/>
            <person name="Perez-Alonso M."/>
            <person name="Obermaier B."/>
            <person name="Delseny M."/>
            <person name="Boutry M."/>
            <person name="Grivell L.A."/>
            <person name="Mache R."/>
            <person name="Puigdomenech P."/>
            <person name="De Simone V."/>
            <person name="Choisne N."/>
            <person name="Artiguenave F."/>
            <person name="Robert C."/>
            <person name="Brottier P."/>
            <person name="Wincker P."/>
            <person name="Cattolico L."/>
            <person name="Weissenbach J."/>
            <person name="Saurin W."/>
            <person name="Quetier F."/>
            <person name="Schaefer M."/>
            <person name="Mueller-Auer S."/>
            <person name="Gabel C."/>
            <person name="Fuchs M."/>
            <person name="Benes V."/>
            <person name="Wurmbach E."/>
            <person name="Drzonek H."/>
            <person name="Erfle H."/>
            <person name="Jordan N."/>
            <person name="Bangert S."/>
            <person name="Wiedelmann R."/>
            <person name="Kranz H."/>
            <person name="Voss H."/>
            <person name="Holland R."/>
            <person name="Brandt P."/>
            <person name="Nyakatura G."/>
            <person name="Vezzi A."/>
            <person name="D'Angelo M."/>
            <person name="Pallavicini A."/>
            <person name="Toppo S."/>
            <person name="Simionati B."/>
            <person name="Conrad A."/>
            <person name="Hornischer K."/>
            <person name="Kauer G."/>
            <person name="Loehnert T.-H."/>
            <person name="Nordsiek G."/>
            <person name="Reichelt J."/>
            <person name="Scharfe M."/>
            <person name="Schoen O."/>
            <person name="Bargues M."/>
            <person name="Terol J."/>
            <person name="Climent J."/>
            <person name="Navarro P."/>
            <person name="Collado C."/>
            <person name="Perez-Perez A."/>
            <person name="Ottenwaelder B."/>
            <person name="Duchemin D."/>
            <person name="Cooke R."/>
            <person name="Laudie M."/>
            <person name="Berger-Llauro C."/>
            <person name="Purnelle B."/>
            <person name="Masuy D."/>
            <person name="de Haan M."/>
            <person name="Maarse A.C."/>
            <person name="Alcaraz J.-P."/>
            <person name="Cottet A."/>
            <person name="Casacuberta E."/>
            <person name="Monfort A."/>
            <person name="Argiriou A."/>
            <person name="Flores M."/>
            <person name="Liguori R."/>
            <person name="Vitale D."/>
            <person name="Mannhaupt G."/>
            <person name="Haase D."/>
            <person name="Schoof H."/>
            <person name="Rudd S."/>
            <person name="Zaccaria P."/>
            <person name="Mewes H.-W."/>
            <person name="Mayer K.F.X."/>
            <person name="Kaul S."/>
            <person name="Town C.D."/>
            <person name="Koo H.L."/>
            <person name="Tallon L.J."/>
            <person name="Jenkins J."/>
            <person name="Rooney T."/>
            <person name="Rizzo M."/>
            <person name="Walts A."/>
            <person name="Utterback T."/>
            <person name="Fujii C.Y."/>
            <person name="Shea T.P."/>
            <person name="Creasy T.H."/>
            <person name="Haas B."/>
            <person name="Maiti R."/>
            <person name="Wu D."/>
            <person name="Peterson J."/>
            <person name="Van Aken S."/>
            <person name="Pai G."/>
            <person name="Militscher J."/>
            <person name="Sellers P."/>
            <person name="Gill J.E."/>
            <person name="Feldblyum T.V."/>
            <person name="Preuss D."/>
            <person name="Lin X."/>
            <person name="Nierman W.C."/>
            <person name="Salzberg S.L."/>
            <person name="White O."/>
            <person name="Venter J.C."/>
            <person name="Fraser C.M."/>
            <person name="Kaneko T."/>
            <person name="Nakamura Y."/>
            <person name="Sato S."/>
            <person name="Kato T."/>
            <person name="Asamizu E."/>
            <person name="Sasamoto S."/>
            <person name="Kimura T."/>
            <person name="Idesawa K."/>
            <person name="Kawashima K."/>
            <person name="Kishida Y."/>
            <person name="Kiyokawa C."/>
            <person name="Kohara M."/>
            <person name="Matsumoto M."/>
            <person name="Matsuno A."/>
            <person name="Muraki A."/>
            <person name="Nakayama S."/>
            <person name="Nakazaki N."/>
            <person name="Shinpo S."/>
            <person name="Takeuchi C."/>
            <person name="Wada T."/>
            <person name="Watanabe A."/>
            <person name="Yamada M."/>
            <person name="Yasuda M."/>
            <person name="Tabata S."/>
        </authorList>
    </citation>
    <scope>NUCLEOTIDE SEQUENCE [LARGE SCALE GENOMIC DNA]</scope>
    <source>
        <strain>cv. Columbia</strain>
    </source>
</reference>
<reference key="3">
    <citation type="journal article" date="2017" name="Plant J.">
        <title>Araport11: a complete reannotation of the Arabidopsis thaliana reference genome.</title>
        <authorList>
            <person name="Cheng C.Y."/>
            <person name="Krishnakumar V."/>
            <person name="Chan A.P."/>
            <person name="Thibaud-Nissen F."/>
            <person name="Schobel S."/>
            <person name="Town C.D."/>
        </authorList>
    </citation>
    <scope>GENOME REANNOTATION</scope>
    <source>
        <strain>cv. Columbia</strain>
    </source>
</reference>
<reference key="4">
    <citation type="journal article" date="1998" name="Proc. Natl. Acad. Sci. U.S.A.">
        <title>The Arabidopsis thaliana RPM1 disease resistance gene product is a peripheral plasma membrane protein that is degraded coincident with the hypersensitive response.</title>
        <authorList>
            <person name="Boyes D.C."/>
            <person name="Nam J."/>
            <person name="Dangl J.L."/>
        </authorList>
    </citation>
    <scope>FUNCTION</scope>
    <scope>SUBCELLULAR LOCATION</scope>
    <scope>DEGRADATION</scope>
</reference>
<reference key="5">
    <citation type="journal article" date="2002" name="Plant Cell">
        <title>Large-scale structure-function analysis of the Arabidopsis RPM1 disease resistance protein.</title>
        <authorList>
            <person name="Tornero P."/>
            <person name="Chao R.A."/>
            <person name="Luthin W.N."/>
            <person name="Goff S.A."/>
            <person name="Dangl J.L."/>
        </authorList>
    </citation>
    <scope>MUTAGENESIS OF SER-43; PRO-105; GLY-174; LEU-186; GLY-203; GLY-205; ALA-211; VAL-219; GLU-247; VAL-269; LEU-272; THR-290; LEU-301; GLY-307; THR-313; GLY-325; GLU-340; LEU-344; ALA-379; GLY-384; GLU-395; SER-439; PRO-442; PRO-464; GLY-467; GLU-471; ALA-474; PRO-494; ARG-497; PRO-498; SER-515; PRO-620; SER-738; GLY-766; LEU-778; LEU-781; ARG-787; ASN-812; LEU-852 AND LEU-924</scope>
</reference>
<reference key="6">
    <citation type="journal article" date="2002" name="Dev. Cell">
        <title>An evolutionarily conserved mediator of plant disease resistance gene function is required for normal Arabidopsis development.</title>
        <authorList>
            <person name="Holt B.F. III"/>
            <person name="Boyes D.C."/>
            <person name="Ellerstroem M."/>
            <person name="Siefers N."/>
            <person name="Wiig A."/>
            <person name="Kauffman S."/>
            <person name="Grant M.R."/>
            <person name="Dangl J.L."/>
        </authorList>
    </citation>
    <scope>INTERACTION WITH TIP49A</scope>
</reference>
<reference key="7">
    <citation type="journal article" date="2002" name="Cell">
        <title>RIN4 interacts with Pseudomonas syringae type III effector molecules and is required for RPM1-mediated resistance in Arabidopsis.</title>
        <authorList>
            <person name="Mackey D."/>
            <person name="Holt B.F. III"/>
            <person name="Wiig A."/>
            <person name="Dangl J.L."/>
        </authorList>
    </citation>
    <scope>INTERACTION WITH RIN4</scope>
</reference>
<reference key="8">
    <citation type="journal article" date="2005" name="Plant Cell">
        <title>RIN13 is a positive regulator of the plant disease resistance protein RPM1.</title>
        <authorList>
            <person name="Al-Daoude A."/>
            <person name="de Torres Zabala M."/>
            <person name="Ko J.-H."/>
            <person name="Grant M."/>
        </authorList>
    </citation>
    <scope>INTERACTION WITH RIN13</scope>
    <source>
        <strain>cv. Col-5</strain>
        <strain>cv. Columbia</strain>
    </source>
</reference>
<reference key="9">
    <citation type="journal article" date="2005" name="Plant J.">
        <title>A duplicated pair of Arabidopsis RING-finger E3 ligases contribute to the RPM1- and RPS2-mediated hypersensitive response.</title>
        <authorList>
            <person name="Kawasaki T."/>
            <person name="Nam J."/>
            <person name="Boyes D.C."/>
            <person name="Holt B.F. III"/>
            <person name="Hubert D.A."/>
            <person name="Wiig A."/>
            <person name="Dangl J.L."/>
        </authorList>
    </citation>
    <scope>INTERACTION WITH RIN2 AND RIN3</scope>
</reference>
<reference key="10">
    <citation type="journal article" date="2010" name="Plant Cell">
        <title>Endosome-associated CRT1 functions early in resistance gene-mediated defense signaling in Arabidopsis and tobacco.</title>
        <authorList>
            <person name="Kang H.-G."/>
            <person name="Oh C.-S."/>
            <person name="Sato M."/>
            <person name="Katagiri F."/>
            <person name="Glazebrook J."/>
            <person name="Takahashi H."/>
            <person name="Kachroo P."/>
            <person name="Martin G.B."/>
            <person name="Klessig D.F."/>
        </authorList>
    </citation>
    <scope>INTERACTION WITH MORC1/CRT1</scope>
</reference>
<comment type="function">
    <text evidence="9">Disease resistance (R) protein that specifically recognizes the AvrRpm1 type III effector avirulence protein from Pseudomonas syringae (PubMed:9861059). Resistance proteins guard the plant against pathogens that contain an appropriate avirulence protein via an indirect interaction with this avirulence protein (PubMed:9861059). That triggers a defense system including the hypersensitive response (HR), which restricts the pathogen growth (PubMed:9861059). Acts via its interaction with RIN4, and probably triggers the plant resistance when RIN4 is phosphorylated by AvrRpm1. It is then degraded at the onset of the hypersensitive response (PubMed:9861059).</text>
</comment>
<comment type="subunit">
    <text evidence="4 5 6 7 8">Interacts directly with RIN4 via its N-terminal region. Interacts (via N-terminus) with RIN2 and RIN3 (via C-terminus). Interacts with TIP49A, a protein known to interact with the TATA binding protein complex (TBP) (PubMed:11955429, PubMed:12062092, PubMed:16212605). Binds to MORC1/CRT1 (PubMed:20332379). Interacts, via its NB-ARC domain, with RIN13 (PubMed:15722472).</text>
</comment>
<comment type="subcellular location">
    <subcellularLocation>
        <location evidence="9">Endomembrane system</location>
        <topology evidence="9">Peripheral membrane protein</topology>
    </subcellularLocation>
    <subcellularLocation>
        <location evidence="9">Cell membrane</location>
        <topology evidence="9">Peripheral membrane protein</topology>
    </subcellularLocation>
</comment>
<comment type="domain">
    <text>The LRR repeats probably act as specificity determinant of pathogen recognition.</text>
</comment>
<comment type="similarity">
    <text evidence="12">Belongs to the disease resistance NB-LRR family.</text>
</comment>
<comment type="online information" name="NIB-LRRS">
    <link uri="http://niblrrs.ucdavis.edu"/>
    <text>Functional and comparative genomics of disease resistance gene homologs</text>
</comment>
<gene>
    <name evidence="10" type="primary">RPM1</name>
    <name evidence="11" type="synonym">RPS3</name>
    <name evidence="13" type="ordered locus">At3g07040</name>
    <name evidence="14" type="ORF">F17A9.20</name>
</gene>
<name>RPM1_ARATH</name>